<sequence length="35" mass="4115">MPTKRFDKKHWKMVVVLLAICGAMLLLRWAAMIWG</sequence>
<evidence type="ECO:0000255" key="1"/>
<evidence type="ECO:0000305" key="2"/>
<accession>Q321L5</accession>
<organism>
    <name type="scientific">Shigella boydii serotype 4 (strain Sb227)</name>
    <dbReference type="NCBI Taxonomy" id="300268"/>
    <lineage>
        <taxon>Bacteria</taxon>
        <taxon>Pseudomonadati</taxon>
        <taxon>Pseudomonadota</taxon>
        <taxon>Gammaproteobacteria</taxon>
        <taxon>Enterobacterales</taxon>
        <taxon>Enterobacteriaceae</taxon>
        <taxon>Shigella</taxon>
    </lineage>
</organism>
<proteinExistence type="predicted"/>
<feature type="chain" id="PRO_0000246682" description="Uncharacterized protein YniD">
    <location>
        <begin position="1"/>
        <end position="35"/>
    </location>
</feature>
<feature type="transmembrane region" description="Helical" evidence="1">
    <location>
        <begin position="14"/>
        <end position="34"/>
    </location>
</feature>
<keyword id="KW-1003">Cell membrane</keyword>
<keyword id="KW-0472">Membrane</keyword>
<keyword id="KW-0812">Transmembrane</keyword>
<keyword id="KW-1133">Transmembrane helix</keyword>
<dbReference type="EMBL" id="CP000036">
    <property type="protein sequence ID" value="ABB65993.1"/>
    <property type="status" value="ALT_INIT"/>
    <property type="molecule type" value="Genomic_DNA"/>
</dbReference>
<dbReference type="RefSeq" id="WP_001142445.1">
    <property type="nucleotide sequence ID" value="NC_007613.1"/>
</dbReference>
<dbReference type="SMR" id="Q321L5"/>
<dbReference type="GeneID" id="93775934"/>
<dbReference type="KEGG" id="sbo:SBO_1369"/>
<dbReference type="HOGENOM" id="CLU_2751364_0_0_6"/>
<dbReference type="Proteomes" id="UP000007067">
    <property type="component" value="Chromosome"/>
</dbReference>
<dbReference type="GO" id="GO:0005886">
    <property type="term" value="C:plasma membrane"/>
    <property type="evidence" value="ECO:0007669"/>
    <property type="project" value="UniProtKB-SubCell"/>
</dbReference>
<dbReference type="InterPro" id="IPR048084">
    <property type="entry name" value="YniD-like"/>
</dbReference>
<dbReference type="NCBIfam" id="NF041491">
    <property type="entry name" value="membrane_YniD"/>
    <property type="match status" value="1"/>
</dbReference>
<reference key="1">
    <citation type="journal article" date="2005" name="Nucleic Acids Res.">
        <title>Genome dynamics and diversity of Shigella species, the etiologic agents of bacillary dysentery.</title>
        <authorList>
            <person name="Yang F."/>
            <person name="Yang J."/>
            <person name="Zhang X."/>
            <person name="Chen L."/>
            <person name="Jiang Y."/>
            <person name="Yan Y."/>
            <person name="Tang X."/>
            <person name="Wang J."/>
            <person name="Xiong Z."/>
            <person name="Dong J."/>
            <person name="Xue Y."/>
            <person name="Zhu Y."/>
            <person name="Xu X."/>
            <person name="Sun L."/>
            <person name="Chen S."/>
            <person name="Nie H."/>
            <person name="Peng J."/>
            <person name="Xu J."/>
            <person name="Wang Y."/>
            <person name="Yuan Z."/>
            <person name="Wen Y."/>
            <person name="Yao Z."/>
            <person name="Shen Y."/>
            <person name="Qiang B."/>
            <person name="Hou Y."/>
            <person name="Yu J."/>
            <person name="Jin Q."/>
        </authorList>
    </citation>
    <scope>NUCLEOTIDE SEQUENCE [LARGE SCALE GENOMIC DNA]</scope>
    <source>
        <strain>Sb227</strain>
    </source>
</reference>
<name>YNID_SHIBS</name>
<comment type="subcellular location">
    <subcellularLocation>
        <location evidence="2">Cell membrane</location>
        <topology evidence="2">Single-pass membrane protein</topology>
    </subcellularLocation>
</comment>
<comment type="sequence caution" evidence="2">
    <conflict type="erroneous initiation">
        <sequence resource="EMBL-CDS" id="ABB65993"/>
    </conflict>
    <text>Extended N-terminus.</text>
</comment>
<gene>
    <name type="primary">yniD</name>
    <name type="ordered locus">SBO_1369</name>
</gene>
<protein>
    <recommendedName>
        <fullName>Uncharacterized protein YniD</fullName>
    </recommendedName>
</protein>